<dbReference type="EMBL" id="AF542548">
    <property type="protein sequence ID" value="AAQ09531.1"/>
    <property type="molecule type" value="mRNA"/>
</dbReference>
<dbReference type="EMBL" id="AK092817">
    <property type="protein sequence ID" value="BAG52613.1"/>
    <property type="molecule type" value="mRNA"/>
</dbReference>
<dbReference type="EMBL" id="AL833813">
    <property type="protein sequence ID" value="CAD38676.1"/>
    <property type="molecule type" value="mRNA"/>
</dbReference>
<dbReference type="EMBL" id="AC016747">
    <property type="protein sequence ID" value="AAY14686.1"/>
    <property type="molecule type" value="Genomic_DNA"/>
</dbReference>
<dbReference type="EMBL" id="CH471053">
    <property type="protein sequence ID" value="EAX00003.1"/>
    <property type="molecule type" value="Genomic_DNA"/>
</dbReference>
<dbReference type="EMBL" id="CH471053">
    <property type="protein sequence ID" value="EAX00006.1"/>
    <property type="molecule type" value="Genomic_DNA"/>
</dbReference>
<dbReference type="EMBL" id="CH471053">
    <property type="protein sequence ID" value="EAX00008.1"/>
    <property type="molecule type" value="Genomic_DNA"/>
</dbReference>
<dbReference type="EMBL" id="BC113671">
    <property type="protein sequence ID" value="AAI13672.1"/>
    <property type="molecule type" value="mRNA"/>
</dbReference>
<dbReference type="EMBL" id="BC117278">
    <property type="protein sequence ID" value="AAI17279.1"/>
    <property type="molecule type" value="mRNA"/>
</dbReference>
<dbReference type="RefSeq" id="NP_001308229.1">
    <property type="nucleotide sequence ID" value="NM_001321300.1"/>
</dbReference>
<dbReference type="RefSeq" id="NP_689605.1">
    <property type="nucleotide sequence ID" value="NM_152392.4"/>
</dbReference>
<dbReference type="SMR" id="Q719I0"/>
<dbReference type="BioGRID" id="126261">
    <property type="interactions" value="5"/>
</dbReference>
<dbReference type="FunCoup" id="Q719I0">
    <property type="interactions" value="683"/>
</dbReference>
<dbReference type="IntAct" id="Q719I0">
    <property type="interactions" value="3"/>
</dbReference>
<dbReference type="iPTMnet" id="Q719I0"/>
<dbReference type="PhosphoSitePlus" id="Q719I0"/>
<dbReference type="BioMuta" id="AHSA2"/>
<dbReference type="DMDM" id="166198353"/>
<dbReference type="jPOST" id="Q719I0"/>
<dbReference type="MassIVE" id="Q719I0"/>
<dbReference type="PaxDb" id="9606-ENSP00000377970"/>
<dbReference type="DNASU" id="130872"/>
<dbReference type="UCSC" id="uc002sbb.4">
    <molecule id="Q719I0-1"/>
    <property type="organism name" value="human"/>
</dbReference>
<dbReference type="AGR" id="HGNC:20437"/>
<dbReference type="GeneCards" id="AHSA2P"/>
<dbReference type="HGNC" id="HGNC:20437">
    <property type="gene designation" value="AHSA2P"/>
</dbReference>
<dbReference type="neXtProt" id="NX_Q719I0"/>
<dbReference type="eggNOG" id="KOG2936">
    <property type="taxonomic scope" value="Eukaryota"/>
</dbReference>
<dbReference type="InParanoid" id="Q719I0"/>
<dbReference type="PAN-GO" id="Q719I0">
    <property type="GO annotations" value="4 GO annotations based on evolutionary models"/>
</dbReference>
<dbReference type="PhylomeDB" id="Q719I0"/>
<dbReference type="PathwayCommons" id="Q719I0"/>
<dbReference type="SignaLink" id="Q719I0"/>
<dbReference type="BioGRID-ORCS" id="130872">
    <property type="hits" value="21 hits in 1143 CRISPR screens"/>
</dbReference>
<dbReference type="ChiTaRS" id="AHSA2">
    <property type="organism name" value="human"/>
</dbReference>
<dbReference type="GenomeRNAi" id="130872"/>
<dbReference type="Pharos" id="Q719I0">
    <property type="development level" value="Tdark"/>
</dbReference>
<dbReference type="PRO" id="PR:Q719I0"/>
<dbReference type="Proteomes" id="UP000005640">
    <property type="component" value="Unplaced"/>
</dbReference>
<dbReference type="RNAct" id="Q719I0">
    <property type="molecule type" value="protein"/>
</dbReference>
<dbReference type="GO" id="GO:0005829">
    <property type="term" value="C:cytosol"/>
    <property type="evidence" value="ECO:0000318"/>
    <property type="project" value="GO_Central"/>
</dbReference>
<dbReference type="GO" id="GO:0001671">
    <property type="term" value="F:ATPase activator activity"/>
    <property type="evidence" value="ECO:0000318"/>
    <property type="project" value="GO_Central"/>
</dbReference>
<dbReference type="GO" id="GO:0051087">
    <property type="term" value="F:protein-folding chaperone binding"/>
    <property type="evidence" value="ECO:0007669"/>
    <property type="project" value="InterPro"/>
</dbReference>
<dbReference type="GO" id="GO:0006457">
    <property type="term" value="P:protein folding"/>
    <property type="evidence" value="ECO:0000318"/>
    <property type="project" value="GO_Central"/>
</dbReference>
<dbReference type="Gene3D" id="3.30.530.20">
    <property type="match status" value="1"/>
</dbReference>
<dbReference type="Gene3D" id="3.15.10.20">
    <property type="entry name" value="Activator of Hsp90 ATPase Aha1, N-terminal domain"/>
    <property type="match status" value="1"/>
</dbReference>
<dbReference type="InterPro" id="IPR036338">
    <property type="entry name" value="Aha1"/>
</dbReference>
<dbReference type="InterPro" id="IPR015310">
    <property type="entry name" value="AHSA1-like_N"/>
</dbReference>
<dbReference type="InterPro" id="IPR013538">
    <property type="entry name" value="ASHA1/2-like_C"/>
</dbReference>
<dbReference type="InterPro" id="IPR023393">
    <property type="entry name" value="START-like_dom_sf"/>
</dbReference>
<dbReference type="PANTHER" id="PTHR13009:SF4">
    <property type="entry name" value="ACTIVATOR OF 90 KDA HEAT SHOCK PROTEIN ATPASE HOMOLOG 2-RELATED"/>
    <property type="match status" value="1"/>
</dbReference>
<dbReference type="PANTHER" id="PTHR13009">
    <property type="entry name" value="HEAT SHOCK PROTEIN 90 HSP90 CO-CHAPERONE AHA-1"/>
    <property type="match status" value="1"/>
</dbReference>
<dbReference type="Pfam" id="PF09229">
    <property type="entry name" value="Aha1_N"/>
    <property type="match status" value="1"/>
</dbReference>
<dbReference type="Pfam" id="PF08327">
    <property type="entry name" value="AHSA1"/>
    <property type="match status" value="1"/>
</dbReference>
<dbReference type="SMART" id="SM01000">
    <property type="entry name" value="Aha1_N"/>
    <property type="match status" value="1"/>
</dbReference>
<dbReference type="SUPFAM" id="SSF103111">
    <property type="entry name" value="Activator of Hsp90 ATPase, Aha1"/>
    <property type="match status" value="1"/>
</dbReference>
<dbReference type="SUPFAM" id="SSF55961">
    <property type="entry name" value="Bet v1-like"/>
    <property type="match status" value="1"/>
</dbReference>
<protein>
    <recommendedName>
        <fullName evidence="7">Putative activator of 90 kDa heat shock protein ATPase homolog 2</fullName>
    </recommendedName>
    <alternativeName>
        <fullName evidence="8">Activator of HSP90 ATPase homolog 2 pseudogene</fullName>
    </alternativeName>
</protein>
<proteinExistence type="uncertain"/>
<feature type="chain" id="PRO_0000315605" description="Putative activator of 90 kDa heat shock protein ATPase homolog 2">
    <location>
        <begin position="1"/>
        <end position="299"/>
    </location>
</feature>
<feature type="splice variant" id="VSP_030569" description="In isoform 3." evidence="3 4 5">
    <location>
        <begin position="1"/>
        <end position="162"/>
    </location>
</feature>
<feature type="splice variant" id="VSP_030570" description="In isoform 2." evidence="6">
    <location>
        <begin position="1"/>
        <end position="153"/>
    </location>
</feature>
<feature type="splice variant" id="VSP_030571" description="In isoform 2." evidence="6">
    <original>ALKT</original>
    <variation>MTLP</variation>
    <location>
        <begin position="154"/>
        <end position="157"/>
    </location>
</feature>
<feature type="sequence variant" id="VAR_038256" description="In a breast cancer sample; somatic mutation." evidence="2">
    <original>M</original>
    <variation>T</variation>
    <location>
        <position position="248"/>
    </location>
</feature>
<evidence type="ECO:0000250" key="1">
    <source>
        <dbReference type="UniProtKB" id="Q12449"/>
    </source>
</evidence>
<evidence type="ECO:0000269" key="2">
    <source>
    </source>
</evidence>
<evidence type="ECO:0000303" key="3">
    <source>
    </source>
</evidence>
<evidence type="ECO:0000303" key="4">
    <source>
    </source>
</evidence>
<evidence type="ECO:0000303" key="5">
    <source>
    </source>
</evidence>
<evidence type="ECO:0000303" key="6">
    <source ref="1"/>
</evidence>
<evidence type="ECO:0000305" key="7"/>
<evidence type="ECO:0000312" key="8">
    <source>
        <dbReference type="HGNC" id="HGNC:20437"/>
    </source>
</evidence>
<keyword id="KW-0025">Alternative splicing</keyword>
<keyword id="KW-0143">Chaperone</keyword>
<keyword id="KW-1185">Reference proteome</keyword>
<keyword id="KW-0346">Stress response</keyword>
<reference key="1">
    <citation type="submission" date="2002-07" db="EMBL/GenBank/DDBJ databases">
        <title>Cloning and characterization of a novel human gene with heat shock hsp90 proteins family signature and phytochrome chromophore attachment site.</title>
        <authorList>
            <person name="Zhang D.L."/>
            <person name="Cai J.J."/>
            <person name="Ma D.L."/>
        </authorList>
    </citation>
    <scope>NUCLEOTIDE SEQUENCE [MRNA] (ISOFORM 2)</scope>
</reference>
<reference key="2">
    <citation type="journal article" date="2004" name="Nat. Genet.">
        <title>Complete sequencing and characterization of 21,243 full-length human cDNAs.</title>
        <authorList>
            <person name="Ota T."/>
            <person name="Suzuki Y."/>
            <person name="Nishikawa T."/>
            <person name="Otsuki T."/>
            <person name="Sugiyama T."/>
            <person name="Irie R."/>
            <person name="Wakamatsu A."/>
            <person name="Hayashi K."/>
            <person name="Sato H."/>
            <person name="Nagai K."/>
            <person name="Kimura K."/>
            <person name="Makita H."/>
            <person name="Sekine M."/>
            <person name="Obayashi M."/>
            <person name="Nishi T."/>
            <person name="Shibahara T."/>
            <person name="Tanaka T."/>
            <person name="Ishii S."/>
            <person name="Yamamoto J."/>
            <person name="Saito K."/>
            <person name="Kawai Y."/>
            <person name="Isono Y."/>
            <person name="Nakamura Y."/>
            <person name="Nagahari K."/>
            <person name="Murakami K."/>
            <person name="Yasuda T."/>
            <person name="Iwayanagi T."/>
            <person name="Wagatsuma M."/>
            <person name="Shiratori A."/>
            <person name="Sudo H."/>
            <person name="Hosoiri T."/>
            <person name="Kaku Y."/>
            <person name="Kodaira H."/>
            <person name="Kondo H."/>
            <person name="Sugawara M."/>
            <person name="Takahashi M."/>
            <person name="Kanda K."/>
            <person name="Yokoi T."/>
            <person name="Furuya T."/>
            <person name="Kikkawa E."/>
            <person name="Omura Y."/>
            <person name="Abe K."/>
            <person name="Kamihara K."/>
            <person name="Katsuta N."/>
            <person name="Sato K."/>
            <person name="Tanikawa M."/>
            <person name="Yamazaki M."/>
            <person name="Ninomiya K."/>
            <person name="Ishibashi T."/>
            <person name="Yamashita H."/>
            <person name="Murakawa K."/>
            <person name="Fujimori K."/>
            <person name="Tanai H."/>
            <person name="Kimata M."/>
            <person name="Watanabe M."/>
            <person name="Hiraoka S."/>
            <person name="Chiba Y."/>
            <person name="Ishida S."/>
            <person name="Ono Y."/>
            <person name="Takiguchi S."/>
            <person name="Watanabe S."/>
            <person name="Yosida M."/>
            <person name="Hotuta T."/>
            <person name="Kusano J."/>
            <person name="Kanehori K."/>
            <person name="Takahashi-Fujii A."/>
            <person name="Hara H."/>
            <person name="Tanase T.-O."/>
            <person name="Nomura Y."/>
            <person name="Togiya S."/>
            <person name="Komai F."/>
            <person name="Hara R."/>
            <person name="Takeuchi K."/>
            <person name="Arita M."/>
            <person name="Imose N."/>
            <person name="Musashino K."/>
            <person name="Yuuki H."/>
            <person name="Oshima A."/>
            <person name="Sasaki N."/>
            <person name="Aotsuka S."/>
            <person name="Yoshikawa Y."/>
            <person name="Matsunawa H."/>
            <person name="Ichihara T."/>
            <person name="Shiohata N."/>
            <person name="Sano S."/>
            <person name="Moriya S."/>
            <person name="Momiyama H."/>
            <person name="Satoh N."/>
            <person name="Takami S."/>
            <person name="Terashima Y."/>
            <person name="Suzuki O."/>
            <person name="Nakagawa S."/>
            <person name="Senoh A."/>
            <person name="Mizoguchi H."/>
            <person name="Goto Y."/>
            <person name="Shimizu F."/>
            <person name="Wakebe H."/>
            <person name="Hishigaki H."/>
            <person name="Watanabe T."/>
            <person name="Sugiyama A."/>
            <person name="Takemoto M."/>
            <person name="Kawakami B."/>
            <person name="Yamazaki M."/>
            <person name="Watanabe K."/>
            <person name="Kumagai A."/>
            <person name="Itakura S."/>
            <person name="Fukuzumi Y."/>
            <person name="Fujimori Y."/>
            <person name="Komiyama M."/>
            <person name="Tashiro H."/>
            <person name="Tanigami A."/>
            <person name="Fujiwara T."/>
            <person name="Ono T."/>
            <person name="Yamada K."/>
            <person name="Fujii Y."/>
            <person name="Ozaki K."/>
            <person name="Hirao M."/>
            <person name="Ohmori Y."/>
            <person name="Kawabata A."/>
            <person name="Hikiji T."/>
            <person name="Kobatake N."/>
            <person name="Inagaki H."/>
            <person name="Ikema Y."/>
            <person name="Okamoto S."/>
            <person name="Okitani R."/>
            <person name="Kawakami T."/>
            <person name="Noguchi S."/>
            <person name="Itoh T."/>
            <person name="Shigeta K."/>
            <person name="Senba T."/>
            <person name="Matsumura K."/>
            <person name="Nakajima Y."/>
            <person name="Mizuno T."/>
            <person name="Morinaga M."/>
            <person name="Sasaki M."/>
            <person name="Togashi T."/>
            <person name="Oyama M."/>
            <person name="Hata H."/>
            <person name="Watanabe M."/>
            <person name="Komatsu T."/>
            <person name="Mizushima-Sugano J."/>
            <person name="Satoh T."/>
            <person name="Shirai Y."/>
            <person name="Takahashi Y."/>
            <person name="Nakagawa K."/>
            <person name="Okumura K."/>
            <person name="Nagase T."/>
            <person name="Nomura N."/>
            <person name="Kikuchi H."/>
            <person name="Masuho Y."/>
            <person name="Yamashita R."/>
            <person name="Nakai K."/>
            <person name="Yada T."/>
            <person name="Nakamura Y."/>
            <person name="Ohara O."/>
            <person name="Isogai T."/>
            <person name="Sugano S."/>
        </authorList>
    </citation>
    <scope>NUCLEOTIDE SEQUENCE [LARGE SCALE MRNA] (ISOFORM 3)</scope>
    <source>
        <tissue>Small intestine</tissue>
    </source>
</reference>
<reference key="3">
    <citation type="journal article" date="2007" name="BMC Genomics">
        <title>The full-ORF clone resource of the German cDNA consortium.</title>
        <authorList>
            <person name="Bechtel S."/>
            <person name="Rosenfelder H."/>
            <person name="Duda A."/>
            <person name="Schmidt C.P."/>
            <person name="Ernst U."/>
            <person name="Wellenreuther R."/>
            <person name="Mehrle A."/>
            <person name="Schuster C."/>
            <person name="Bahr A."/>
            <person name="Bloecker H."/>
            <person name="Heubner D."/>
            <person name="Hoerlein A."/>
            <person name="Michel G."/>
            <person name="Wedler H."/>
            <person name="Koehrer K."/>
            <person name="Ottenwaelder B."/>
            <person name="Poustka A."/>
            <person name="Wiemann S."/>
            <person name="Schupp I."/>
        </authorList>
    </citation>
    <scope>NUCLEOTIDE SEQUENCE [LARGE SCALE MRNA] (ISOFORM 3)</scope>
    <source>
        <tissue>Brain</tissue>
    </source>
</reference>
<reference key="4">
    <citation type="journal article" date="2005" name="Nature">
        <title>Generation and annotation of the DNA sequences of human chromosomes 2 and 4.</title>
        <authorList>
            <person name="Hillier L.W."/>
            <person name="Graves T.A."/>
            <person name="Fulton R.S."/>
            <person name="Fulton L.A."/>
            <person name="Pepin K.H."/>
            <person name="Minx P."/>
            <person name="Wagner-McPherson C."/>
            <person name="Layman D."/>
            <person name="Wylie K."/>
            <person name="Sekhon M."/>
            <person name="Becker M.C."/>
            <person name="Fewell G.A."/>
            <person name="Delehaunty K.D."/>
            <person name="Miner T.L."/>
            <person name="Nash W.E."/>
            <person name="Kremitzki C."/>
            <person name="Oddy L."/>
            <person name="Du H."/>
            <person name="Sun H."/>
            <person name="Bradshaw-Cordum H."/>
            <person name="Ali J."/>
            <person name="Carter J."/>
            <person name="Cordes M."/>
            <person name="Harris A."/>
            <person name="Isak A."/>
            <person name="van Brunt A."/>
            <person name="Nguyen C."/>
            <person name="Du F."/>
            <person name="Courtney L."/>
            <person name="Kalicki J."/>
            <person name="Ozersky P."/>
            <person name="Abbott S."/>
            <person name="Armstrong J."/>
            <person name="Belter E.A."/>
            <person name="Caruso L."/>
            <person name="Cedroni M."/>
            <person name="Cotton M."/>
            <person name="Davidson T."/>
            <person name="Desai A."/>
            <person name="Elliott G."/>
            <person name="Erb T."/>
            <person name="Fronick C."/>
            <person name="Gaige T."/>
            <person name="Haakenson W."/>
            <person name="Haglund K."/>
            <person name="Holmes A."/>
            <person name="Harkins R."/>
            <person name="Kim K."/>
            <person name="Kruchowski S.S."/>
            <person name="Strong C.M."/>
            <person name="Grewal N."/>
            <person name="Goyea E."/>
            <person name="Hou S."/>
            <person name="Levy A."/>
            <person name="Martinka S."/>
            <person name="Mead K."/>
            <person name="McLellan M.D."/>
            <person name="Meyer R."/>
            <person name="Randall-Maher J."/>
            <person name="Tomlinson C."/>
            <person name="Dauphin-Kohlberg S."/>
            <person name="Kozlowicz-Reilly A."/>
            <person name="Shah N."/>
            <person name="Swearengen-Shahid S."/>
            <person name="Snider J."/>
            <person name="Strong J.T."/>
            <person name="Thompson J."/>
            <person name="Yoakum M."/>
            <person name="Leonard S."/>
            <person name="Pearman C."/>
            <person name="Trani L."/>
            <person name="Radionenko M."/>
            <person name="Waligorski J.E."/>
            <person name="Wang C."/>
            <person name="Rock S.M."/>
            <person name="Tin-Wollam A.-M."/>
            <person name="Maupin R."/>
            <person name="Latreille P."/>
            <person name="Wendl M.C."/>
            <person name="Yang S.-P."/>
            <person name="Pohl C."/>
            <person name="Wallis J.W."/>
            <person name="Spieth J."/>
            <person name="Bieri T.A."/>
            <person name="Berkowicz N."/>
            <person name="Nelson J.O."/>
            <person name="Osborne J."/>
            <person name="Ding L."/>
            <person name="Meyer R."/>
            <person name="Sabo A."/>
            <person name="Shotland Y."/>
            <person name="Sinha P."/>
            <person name="Wohldmann P.E."/>
            <person name="Cook L.L."/>
            <person name="Hickenbotham M.T."/>
            <person name="Eldred J."/>
            <person name="Williams D."/>
            <person name="Jones T.A."/>
            <person name="She X."/>
            <person name="Ciccarelli F.D."/>
            <person name="Izaurralde E."/>
            <person name="Taylor J."/>
            <person name="Schmutz J."/>
            <person name="Myers R.M."/>
            <person name="Cox D.R."/>
            <person name="Huang X."/>
            <person name="McPherson J.D."/>
            <person name="Mardis E.R."/>
            <person name="Clifton S.W."/>
            <person name="Warren W.C."/>
            <person name="Chinwalla A.T."/>
            <person name="Eddy S.R."/>
            <person name="Marra M.A."/>
            <person name="Ovcharenko I."/>
            <person name="Furey T.S."/>
            <person name="Miller W."/>
            <person name="Eichler E.E."/>
            <person name="Bork P."/>
            <person name="Suyama M."/>
            <person name="Torrents D."/>
            <person name="Waterston R.H."/>
            <person name="Wilson R.K."/>
        </authorList>
    </citation>
    <scope>NUCLEOTIDE SEQUENCE [LARGE SCALE GENOMIC DNA]</scope>
</reference>
<reference key="5">
    <citation type="submission" date="2005-09" db="EMBL/GenBank/DDBJ databases">
        <authorList>
            <person name="Mural R.J."/>
            <person name="Istrail S."/>
            <person name="Sutton G.G."/>
            <person name="Florea L."/>
            <person name="Halpern A.L."/>
            <person name="Mobarry C.M."/>
            <person name="Lippert R."/>
            <person name="Walenz B."/>
            <person name="Shatkay H."/>
            <person name="Dew I."/>
            <person name="Miller J.R."/>
            <person name="Flanigan M.J."/>
            <person name="Edwards N.J."/>
            <person name="Bolanos R."/>
            <person name="Fasulo D."/>
            <person name="Halldorsson B.V."/>
            <person name="Hannenhalli S."/>
            <person name="Turner R."/>
            <person name="Yooseph S."/>
            <person name="Lu F."/>
            <person name="Nusskern D.R."/>
            <person name="Shue B.C."/>
            <person name="Zheng X.H."/>
            <person name="Zhong F."/>
            <person name="Delcher A.L."/>
            <person name="Huson D.H."/>
            <person name="Kravitz S.A."/>
            <person name="Mouchard L."/>
            <person name="Reinert K."/>
            <person name="Remington K.A."/>
            <person name="Clark A.G."/>
            <person name="Waterman M.S."/>
            <person name="Eichler E.E."/>
            <person name="Adams M.D."/>
            <person name="Hunkapiller M.W."/>
            <person name="Myers E.W."/>
            <person name="Venter J.C."/>
        </authorList>
    </citation>
    <scope>NUCLEOTIDE SEQUENCE [LARGE SCALE GENOMIC DNA]</scope>
</reference>
<reference key="6">
    <citation type="journal article" date="2004" name="Genome Res.">
        <title>The status, quality, and expansion of the NIH full-length cDNA project: the Mammalian Gene Collection (MGC).</title>
        <authorList>
            <consortium name="The MGC Project Team"/>
        </authorList>
    </citation>
    <scope>NUCLEOTIDE SEQUENCE [LARGE SCALE MRNA] (ISOFORM 3)</scope>
</reference>
<reference key="7">
    <citation type="journal article" date="2002" name="Mol. Cell">
        <title>Activation of the ATPase activity of hsp90 by the stress-regulated cochaperone aha1.</title>
        <authorList>
            <person name="Panaretou B."/>
            <person name="Siligardi G."/>
            <person name="Meyer P."/>
            <person name="Maloney A."/>
            <person name="Sullivan J.K."/>
            <person name="Singh S."/>
            <person name="Millson S.H."/>
            <person name="Clarke P.A."/>
            <person name="Naaby-Hansen S."/>
            <person name="Stein R."/>
            <person name="Cramer R."/>
            <person name="Mollapour M."/>
            <person name="Workman P."/>
            <person name="Piper P.W."/>
            <person name="Pearl L.H."/>
            <person name="Prodromou C."/>
        </authorList>
    </citation>
    <scope>IDENTIFICATION</scope>
</reference>
<reference key="8">
    <citation type="journal article" date="2006" name="Science">
        <title>The consensus coding sequences of human breast and colorectal cancers.</title>
        <authorList>
            <person name="Sjoeblom T."/>
            <person name="Jones S."/>
            <person name="Wood L.D."/>
            <person name="Parsons D.W."/>
            <person name="Lin J."/>
            <person name="Barber T.D."/>
            <person name="Mandelker D."/>
            <person name="Leary R.J."/>
            <person name="Ptak J."/>
            <person name="Silliman N."/>
            <person name="Szabo S."/>
            <person name="Buckhaults P."/>
            <person name="Farrell C."/>
            <person name="Meeh P."/>
            <person name="Markowitz S.D."/>
            <person name="Willis J."/>
            <person name="Dawson D."/>
            <person name="Willson J.K.V."/>
            <person name="Gazdar A.F."/>
            <person name="Hartigan J."/>
            <person name="Wu L."/>
            <person name="Liu C."/>
            <person name="Parmigiani G."/>
            <person name="Park B.H."/>
            <person name="Bachman K.E."/>
            <person name="Papadopoulos N."/>
            <person name="Vogelstein B."/>
            <person name="Kinzler K.W."/>
            <person name="Velculescu V.E."/>
        </authorList>
    </citation>
    <scope>VARIANT [LARGE SCALE ANALYSIS] THR-248</scope>
</reference>
<accession>Q719I0</accession>
<accession>B3KS51</accession>
<accession>D6W5E0</accession>
<accession>Q8NDU5</accession>
<gene>
    <name evidence="8" type="primary">AHSA2P</name>
    <name evidence="8" type="synonym">AHSA2</name>
</gene>
<sequence length="299" mass="33806">MAKWGQGNPHWIVEEREDGTNVNNWRWTERDATSLSKGKFQELLVGIVVENDAGRGEINELKQVEGEASCSSRKGKLIFFYEWNIKLGWKGIVKESGVKHKGLIEIPNLSEENEVDDTEVSLSKKKGDGVILKDLMKTAGTAKVREALGDYLKALKTEFTTGMILPTKAMATQELTVKRKLSGNTLQVQASSPVALGVRIPTVALHMMELFDTTVEQLYSIFTVKELTNKKIIMKWRCGNWPEEHYAMVALNFVPTLGQTELQLKEFLSICKEENMKFCWQKQHFEEIKGSLQLTPLNG</sequence>
<organism>
    <name type="scientific">Homo sapiens</name>
    <name type="common">Human</name>
    <dbReference type="NCBI Taxonomy" id="9606"/>
    <lineage>
        <taxon>Eukaryota</taxon>
        <taxon>Metazoa</taxon>
        <taxon>Chordata</taxon>
        <taxon>Craniata</taxon>
        <taxon>Vertebrata</taxon>
        <taxon>Euteleostomi</taxon>
        <taxon>Mammalia</taxon>
        <taxon>Eutheria</taxon>
        <taxon>Euarchontoglires</taxon>
        <taxon>Primates</taxon>
        <taxon>Haplorrhini</taxon>
        <taxon>Catarrhini</taxon>
        <taxon>Hominidae</taxon>
        <taxon>Homo</taxon>
    </lineage>
</organism>
<comment type="function">
    <text evidence="1">Co-chaperone that stimulates HSP90 ATPase activity.</text>
</comment>
<comment type="interaction">
    <interactant intactId="EBI-9361704">
        <id>Q719I0</id>
    </interactant>
    <interactant intactId="EBI-748397">
        <id>P50222</id>
        <label>MEOX2</label>
    </interactant>
    <organismsDiffer>false</organismsDiffer>
    <experiments>3</experiments>
</comment>
<comment type="alternative products">
    <event type="alternative splicing"/>
    <isoform>
        <id>Q719I0-1</id>
        <name>1</name>
        <sequence type="displayed"/>
    </isoform>
    <isoform>
        <id>Q719I0-2</id>
        <name>2</name>
        <sequence type="described" ref="VSP_030570 VSP_030571"/>
    </isoform>
    <isoform>
        <id>Q719I0-3</id>
        <name>3</name>
        <sequence type="described" ref="VSP_030569"/>
    </isoform>
</comment>
<comment type="similarity">
    <text evidence="7">Belongs to the AHA1 family.</text>
</comment>
<comment type="caution">
    <text evidence="7">Could be the product of a pseudogene.</text>
</comment>
<name>AHSA2_HUMAN</name>